<keyword id="KW-1003">Cell membrane</keyword>
<keyword id="KW-1015">Disulfide bond</keyword>
<keyword id="KW-0297">G-protein coupled receptor</keyword>
<keyword id="KW-0325">Glycoprotein</keyword>
<keyword id="KW-0449">Lipoprotein</keyword>
<keyword id="KW-0472">Membrane</keyword>
<keyword id="KW-0564">Palmitate</keyword>
<keyword id="KW-0675">Receptor</keyword>
<keyword id="KW-1185">Reference proteome</keyword>
<keyword id="KW-0807">Transducer</keyword>
<keyword id="KW-0812">Transmembrane</keyword>
<keyword id="KW-1133">Transmembrane helix</keyword>
<sequence>MEPNGTVHSCCLDSMALKVTISVVLTTLILITIAGNVVVCLAVSLNRRLRSLTNCFIVSLAATDLLLGLLVLPFSAIYQLSFTWSFGHVFCNIYTSLDVMLCTASILNLFMISLDRYCAVTDPLRYPVLVTPVRVAISLVFIWVISITLSFLSIHLGWNSRNGTRGGNDTFKCKVQVNEVYGLVDGLVTFYLPLLIMCVTYYRIFKIAREQAKRINHISSWKAATIREHKATVTLAAVMGAFIICWFPYFTAFVYRGLRGDDAINEAVEGIVLWLGYANSALNPILYAALNRDFRTAYQQLFHCKFASHNSHKTSLRLNNSLLPRSQSREGRWQEEKPLKLQVWSGTELTHPQGNPIR</sequence>
<gene>
    <name type="primary">Hrh2</name>
</gene>
<dbReference type="EMBL" id="S57565">
    <property type="protein sequence ID" value="AAB19935.1"/>
    <property type="molecule type" value="Genomic_DNA"/>
</dbReference>
<dbReference type="PIR" id="JQ1278">
    <property type="entry name" value="JQ1278"/>
</dbReference>
<dbReference type="RefSeq" id="NP_037097.3">
    <property type="nucleotide sequence ID" value="NM_012965.3"/>
</dbReference>
<dbReference type="SMR" id="P25102"/>
<dbReference type="FunCoup" id="P25102">
    <property type="interactions" value="392"/>
</dbReference>
<dbReference type="IntAct" id="P25102">
    <property type="interactions" value="2"/>
</dbReference>
<dbReference type="STRING" id="10116.ENSRNOP00000024580"/>
<dbReference type="BindingDB" id="P25102"/>
<dbReference type="ChEMBL" id="CHEMBL4654"/>
<dbReference type="DrugCentral" id="P25102"/>
<dbReference type="GuidetoPHARMACOLOGY" id="263"/>
<dbReference type="GlyCosmos" id="P25102">
    <property type="glycosylation" value="1 site, No reported glycans"/>
</dbReference>
<dbReference type="GlyGen" id="P25102">
    <property type="glycosylation" value="1 site"/>
</dbReference>
<dbReference type="PhosphoSitePlus" id="P25102"/>
<dbReference type="PaxDb" id="10116-ENSRNOP00000024580"/>
<dbReference type="AGR" id="RGD:2831"/>
<dbReference type="RGD" id="2831">
    <property type="gene designation" value="Hrh2"/>
</dbReference>
<dbReference type="eggNOG" id="KOG3656">
    <property type="taxonomic scope" value="Eukaryota"/>
</dbReference>
<dbReference type="InParanoid" id="P25102"/>
<dbReference type="PhylomeDB" id="P25102"/>
<dbReference type="Reactome" id="R-RNO-390650">
    <property type="pathway name" value="Histamine receptors"/>
</dbReference>
<dbReference type="PRO" id="PR:P25102"/>
<dbReference type="Proteomes" id="UP000002494">
    <property type="component" value="Unplaced"/>
</dbReference>
<dbReference type="GO" id="GO:0030425">
    <property type="term" value="C:dendrite"/>
    <property type="evidence" value="ECO:0000318"/>
    <property type="project" value="GO_Central"/>
</dbReference>
<dbReference type="GO" id="GO:0005886">
    <property type="term" value="C:plasma membrane"/>
    <property type="evidence" value="ECO:0000318"/>
    <property type="project" value="GO_Central"/>
</dbReference>
<dbReference type="GO" id="GO:0045202">
    <property type="term" value="C:synapse"/>
    <property type="evidence" value="ECO:0007669"/>
    <property type="project" value="GOC"/>
</dbReference>
<dbReference type="GO" id="GO:1901363">
    <property type="term" value="F:heterocyclic compound binding"/>
    <property type="evidence" value="ECO:0000314"/>
    <property type="project" value="RGD"/>
</dbReference>
<dbReference type="GO" id="GO:0004969">
    <property type="term" value="F:histamine receptor activity"/>
    <property type="evidence" value="ECO:0000314"/>
    <property type="project" value="RGD"/>
</dbReference>
<dbReference type="GO" id="GO:0030594">
    <property type="term" value="F:neurotransmitter receptor activity"/>
    <property type="evidence" value="ECO:0000318"/>
    <property type="project" value="GO_Central"/>
</dbReference>
<dbReference type="GO" id="GO:0071420">
    <property type="term" value="P:cellular response to histamine"/>
    <property type="evidence" value="ECO:0000270"/>
    <property type="project" value="RGD"/>
</dbReference>
<dbReference type="GO" id="GO:0007268">
    <property type="term" value="P:chemical synaptic transmission"/>
    <property type="evidence" value="ECO:0000318"/>
    <property type="project" value="GO_Central"/>
</dbReference>
<dbReference type="GO" id="GO:0048565">
    <property type="term" value="P:digestive tract development"/>
    <property type="evidence" value="ECO:0000266"/>
    <property type="project" value="RGD"/>
</dbReference>
<dbReference type="GO" id="GO:0003382">
    <property type="term" value="P:epithelial cell morphogenesis"/>
    <property type="evidence" value="ECO:0000266"/>
    <property type="project" value="RGD"/>
</dbReference>
<dbReference type="GO" id="GO:0007187">
    <property type="term" value="P:G protein-coupled receptor signaling pathway, coupled to cyclic nucleotide second messenger"/>
    <property type="evidence" value="ECO:0000318"/>
    <property type="project" value="GO_Central"/>
</dbReference>
<dbReference type="GO" id="GO:0001696">
    <property type="term" value="P:gastric acid secretion"/>
    <property type="evidence" value="ECO:0000266"/>
    <property type="project" value="RGD"/>
</dbReference>
<dbReference type="GO" id="GO:0001698">
    <property type="term" value="P:gastrin-induced gastric acid secretion"/>
    <property type="evidence" value="ECO:0000266"/>
    <property type="project" value="RGD"/>
</dbReference>
<dbReference type="GO" id="GO:0048732">
    <property type="term" value="P:gland development"/>
    <property type="evidence" value="ECO:0000266"/>
    <property type="project" value="RGD"/>
</dbReference>
<dbReference type="GO" id="GO:0001697">
    <property type="term" value="P:histamine-induced gastric acid secretion"/>
    <property type="evidence" value="ECO:0000266"/>
    <property type="project" value="RGD"/>
</dbReference>
<dbReference type="GO" id="GO:0007613">
    <property type="term" value="P:memory"/>
    <property type="evidence" value="ECO:0000266"/>
    <property type="project" value="RGD"/>
</dbReference>
<dbReference type="GO" id="GO:1900139">
    <property type="term" value="P:negative regulation of arachidonate secretion"/>
    <property type="evidence" value="ECO:0000314"/>
    <property type="project" value="RGD"/>
</dbReference>
<dbReference type="GO" id="GO:0045907">
    <property type="term" value="P:positive regulation of vasoconstriction"/>
    <property type="evidence" value="ECO:0007669"/>
    <property type="project" value="InterPro"/>
</dbReference>
<dbReference type="GO" id="GO:0048167">
    <property type="term" value="P:regulation of synaptic plasticity"/>
    <property type="evidence" value="ECO:0000266"/>
    <property type="project" value="RGD"/>
</dbReference>
<dbReference type="GO" id="GO:0008542">
    <property type="term" value="P:visual learning"/>
    <property type="evidence" value="ECO:0000266"/>
    <property type="project" value="RGD"/>
</dbReference>
<dbReference type="CDD" id="cd15051">
    <property type="entry name" value="7tmA_Histamine_H2R"/>
    <property type="match status" value="1"/>
</dbReference>
<dbReference type="FunFam" id="1.20.1070.10:FF:000121">
    <property type="entry name" value="Histamine H2 receptor"/>
    <property type="match status" value="1"/>
</dbReference>
<dbReference type="Gene3D" id="1.20.1070.10">
    <property type="entry name" value="Rhodopsin 7-helix transmembrane proteins"/>
    <property type="match status" value="1"/>
</dbReference>
<dbReference type="InterPro" id="IPR000276">
    <property type="entry name" value="GPCR_Rhodpsn"/>
</dbReference>
<dbReference type="InterPro" id="IPR017452">
    <property type="entry name" value="GPCR_Rhodpsn_7TM"/>
</dbReference>
<dbReference type="InterPro" id="IPR000503">
    <property type="entry name" value="Histamine_H2_rcpt"/>
</dbReference>
<dbReference type="PANTHER" id="PTHR24247">
    <property type="entry name" value="5-HYDROXYTRYPTAMINE RECEPTOR"/>
    <property type="match status" value="1"/>
</dbReference>
<dbReference type="PANTHER" id="PTHR24247:SF278">
    <property type="entry name" value="HISTAMINE H2 RECEPTOR"/>
    <property type="match status" value="1"/>
</dbReference>
<dbReference type="Pfam" id="PF00001">
    <property type="entry name" value="7tm_1"/>
    <property type="match status" value="1"/>
</dbReference>
<dbReference type="PRINTS" id="PR00237">
    <property type="entry name" value="GPCRRHODOPSN"/>
</dbReference>
<dbReference type="PRINTS" id="PR00531">
    <property type="entry name" value="HISTAMINEH2R"/>
</dbReference>
<dbReference type="SMART" id="SM01381">
    <property type="entry name" value="7TM_GPCR_Srsx"/>
    <property type="match status" value="1"/>
</dbReference>
<dbReference type="SUPFAM" id="SSF81321">
    <property type="entry name" value="Family A G protein-coupled receptor-like"/>
    <property type="match status" value="1"/>
</dbReference>
<dbReference type="PROSITE" id="PS00237">
    <property type="entry name" value="G_PROTEIN_RECEP_F1_1"/>
    <property type="match status" value="1"/>
</dbReference>
<dbReference type="PROSITE" id="PS50262">
    <property type="entry name" value="G_PROTEIN_RECEP_F1_2"/>
    <property type="match status" value="1"/>
</dbReference>
<name>HRH2_RAT</name>
<organism>
    <name type="scientific">Rattus norvegicus</name>
    <name type="common">Rat</name>
    <dbReference type="NCBI Taxonomy" id="10116"/>
    <lineage>
        <taxon>Eukaryota</taxon>
        <taxon>Metazoa</taxon>
        <taxon>Chordata</taxon>
        <taxon>Craniata</taxon>
        <taxon>Vertebrata</taxon>
        <taxon>Euteleostomi</taxon>
        <taxon>Mammalia</taxon>
        <taxon>Eutheria</taxon>
        <taxon>Euarchontoglires</taxon>
        <taxon>Glires</taxon>
        <taxon>Rodentia</taxon>
        <taxon>Myomorpha</taxon>
        <taxon>Muroidea</taxon>
        <taxon>Muridae</taxon>
        <taxon>Murinae</taxon>
        <taxon>Rattus</taxon>
    </lineage>
</organism>
<comment type="function">
    <text>The H2 subclass of histamine receptors mediates gastric acid secretion. The activity of this receptor is mediated by G proteins which activate adenylyl cyclase.</text>
</comment>
<comment type="subcellular location">
    <subcellularLocation>
        <location>Cell membrane</location>
        <topology>Multi-pass membrane protein</topology>
    </subcellularLocation>
</comment>
<comment type="similarity">
    <text evidence="3">Belongs to the G-protein coupled receptor 1 family.</text>
</comment>
<protein>
    <recommendedName>
        <fullName>Histamine H2 receptor</fullName>
        <shortName>H2R</shortName>
        <shortName>HH2R</shortName>
    </recommendedName>
    <alternativeName>
        <fullName>Gastric receptor I</fullName>
    </alternativeName>
</protein>
<feature type="chain" id="PRO_0000069688" description="Histamine H2 receptor">
    <location>
        <begin position="1"/>
        <end position="358"/>
    </location>
</feature>
<feature type="topological domain" description="Extracellular" evidence="2">
    <location>
        <begin position="1"/>
        <end position="22"/>
    </location>
</feature>
<feature type="transmembrane region" description="Helical; Name=1" evidence="2">
    <location>
        <begin position="23"/>
        <end position="44"/>
    </location>
</feature>
<feature type="topological domain" description="Cytoplasmic" evidence="2">
    <location>
        <begin position="45"/>
        <end position="57"/>
    </location>
</feature>
<feature type="transmembrane region" description="Helical; Name=2" evidence="2">
    <location>
        <begin position="58"/>
        <end position="81"/>
    </location>
</feature>
<feature type="topological domain" description="Extracellular" evidence="2">
    <location>
        <begin position="82"/>
        <end position="92"/>
    </location>
</feature>
<feature type="transmembrane region" description="Helical; Name=3" evidence="2">
    <location>
        <begin position="93"/>
        <end position="114"/>
    </location>
</feature>
<feature type="topological domain" description="Cytoplasmic" evidence="2">
    <location>
        <begin position="115"/>
        <end position="134"/>
    </location>
</feature>
<feature type="transmembrane region" description="Helical; Name=4" evidence="2">
    <location>
        <begin position="135"/>
        <end position="159"/>
    </location>
</feature>
<feature type="topological domain" description="Extracellular" evidence="2">
    <location>
        <begin position="160"/>
        <end position="179"/>
    </location>
</feature>
<feature type="transmembrane region" description="Helical; Name=5" evidence="2">
    <location>
        <begin position="180"/>
        <end position="203"/>
    </location>
</feature>
<feature type="topological domain" description="Cytoplasmic" evidence="2">
    <location>
        <begin position="204"/>
        <end position="233"/>
    </location>
</feature>
<feature type="transmembrane region" description="Helical; Name=6" evidence="2">
    <location>
        <begin position="234"/>
        <end position="257"/>
    </location>
</feature>
<feature type="topological domain" description="Extracellular" evidence="2">
    <location>
        <begin position="258"/>
        <end position="266"/>
    </location>
</feature>
<feature type="transmembrane region" description="Helical; Name=7" evidence="2">
    <location>
        <begin position="267"/>
        <end position="288"/>
    </location>
</feature>
<feature type="topological domain" description="Cytoplasmic" evidence="2">
    <location>
        <begin position="289"/>
        <end position="358"/>
    </location>
</feature>
<feature type="site" description="Essential for histamine binding" evidence="1">
    <location>
        <position position="98"/>
    </location>
</feature>
<feature type="site" description="Essential for tiotidine binding and implicated in histamine binding" evidence="1">
    <location>
        <position position="185"/>
    </location>
</feature>
<feature type="site" description="Implicated in histamine binding" evidence="1">
    <location>
        <position position="189"/>
    </location>
</feature>
<feature type="lipid moiety-binding region" description="S-palmitoyl cysteine" evidence="1">
    <location>
        <position position="304"/>
    </location>
</feature>
<feature type="glycosylation site" description="N-linked (GlcNAc...) asparagine" evidence="2">
    <location>
        <position position="4"/>
    </location>
</feature>
<feature type="disulfide bond" evidence="3">
    <location>
        <begin position="91"/>
        <end position="173"/>
    </location>
</feature>
<proteinExistence type="inferred from homology"/>
<accession>P25102</accession>
<evidence type="ECO:0000250" key="1"/>
<evidence type="ECO:0000255" key="2"/>
<evidence type="ECO:0000255" key="3">
    <source>
        <dbReference type="PROSITE-ProRule" id="PRU00521"/>
    </source>
</evidence>
<reference key="1">
    <citation type="journal article" date="1991" name="Biochem. Biophys. Res. Commun.">
        <title>Cloning and tissue expression of a rat histamine H2-receptor gene.</title>
        <authorList>
            <person name="Ruat M."/>
            <person name="Traiffort E."/>
            <person name="Arrang J.-M."/>
            <person name="Leurs R."/>
            <person name="Schwartz J.-C."/>
        </authorList>
    </citation>
    <scope>NUCLEOTIDE SEQUENCE [GENOMIC DNA]</scope>
</reference>